<feature type="chain" id="PRO_0000116337" description="Uncharacterized protein in TK 3'region">
    <location>
        <begin position="1"/>
        <end position="32" status="greater than"/>
    </location>
</feature>
<feature type="non-terminal residue">
    <location>
        <position position="32"/>
    </location>
</feature>
<organismHost>
    <name type="scientific">Gallus gallus</name>
    <name type="common">Chicken</name>
    <dbReference type="NCBI Taxonomy" id="9031"/>
</organismHost>
<accession>P23985</accession>
<organism>
    <name type="scientific">Infectious laryngotracheitis virus (strain Thorne V882)</name>
    <name type="common">ILTV</name>
    <name type="synonym">Gallid herpesvirus 1</name>
    <dbReference type="NCBI Taxonomy" id="10344"/>
    <lineage>
        <taxon>Viruses</taxon>
        <taxon>Duplodnaviria</taxon>
        <taxon>Heunggongvirae</taxon>
        <taxon>Peploviricota</taxon>
        <taxon>Herviviricetes</taxon>
        <taxon>Herpesvirales</taxon>
        <taxon>Orthoherpesviridae</taxon>
        <taxon>Alphaherpesvirinae</taxon>
        <taxon>Iltovirus</taxon>
        <taxon>Iltovirus gallidalpha1</taxon>
        <taxon>Infectious laryngotracheitis virus</taxon>
    </lineage>
</organism>
<protein>
    <recommendedName>
        <fullName>Uncharacterized protein in TK 3'region</fullName>
    </recommendedName>
</protein>
<name>YTK3_ILTVT</name>
<dbReference type="EMBL" id="D00565">
    <property type="protein sequence ID" value="BAA00443.1"/>
    <property type="molecule type" value="Genomic_DNA"/>
</dbReference>
<reference key="1">
    <citation type="journal article" date="1990" name="J. Gen. Virol.">
        <title>Analysis of the nucleotide sequence of DNA from the region of the thymidine kinase gene of infectious laryngotracheitis virus; potential evolutionary relationships between the herpesvirus subfamilies.</title>
        <authorList>
            <person name="Griffin A.M."/>
            <person name="Boursnell M.E."/>
        </authorList>
    </citation>
    <scope>NUCLEOTIDE SEQUENCE [GENOMIC DNA]</scope>
</reference>
<sequence length="32" mass="3799">MSFTHFLALYSFLLERAWLHQQPAPMGHAREI</sequence>
<proteinExistence type="predicted"/>